<feature type="chain" id="PRO_0000382043" description="Prephenate dehydratase">
    <location>
        <begin position="1"/>
        <end position="321"/>
    </location>
</feature>
<feature type="domain" description="Prephenate dehydratase" evidence="2">
    <location>
        <begin position="3"/>
        <end position="189"/>
    </location>
</feature>
<feature type="domain" description="ACT" evidence="3">
    <location>
        <begin position="203"/>
        <end position="280"/>
    </location>
</feature>
<feature type="site" description="Essential for activity" evidence="1">
    <location>
        <position position="182"/>
    </location>
</feature>
<keyword id="KW-0028">Amino-acid biosynthesis</keyword>
<keyword id="KW-0057">Aromatic amino acid biosynthesis</keyword>
<keyword id="KW-0456">Lyase</keyword>
<keyword id="KW-0584">Phenylalanine biosynthesis</keyword>
<keyword id="KW-1185">Reference proteome</keyword>
<name>PHEA_MYCTA</name>
<organism>
    <name type="scientific">Mycobacterium tuberculosis (strain ATCC 25177 / H37Ra)</name>
    <dbReference type="NCBI Taxonomy" id="419947"/>
    <lineage>
        <taxon>Bacteria</taxon>
        <taxon>Bacillati</taxon>
        <taxon>Actinomycetota</taxon>
        <taxon>Actinomycetes</taxon>
        <taxon>Mycobacteriales</taxon>
        <taxon>Mycobacteriaceae</taxon>
        <taxon>Mycobacterium</taxon>
        <taxon>Mycobacterium tuberculosis complex</taxon>
    </lineage>
</organism>
<accession>A5U9G7</accession>
<evidence type="ECO:0000250" key="1"/>
<evidence type="ECO:0000255" key="2">
    <source>
        <dbReference type="PROSITE-ProRule" id="PRU00517"/>
    </source>
</evidence>
<evidence type="ECO:0000255" key="3">
    <source>
        <dbReference type="PROSITE-ProRule" id="PRU01007"/>
    </source>
</evidence>
<gene>
    <name type="primary">pheA</name>
    <name type="ordered locus">MRA_3878</name>
</gene>
<dbReference type="EC" id="4.2.1.51"/>
<dbReference type="EMBL" id="CP000611">
    <property type="protein sequence ID" value="ABQ75667.1"/>
    <property type="molecule type" value="Genomic_DNA"/>
</dbReference>
<dbReference type="RefSeq" id="WP_003420906.1">
    <property type="nucleotide sequence ID" value="NZ_CP016972.1"/>
</dbReference>
<dbReference type="SMR" id="A5U9G7"/>
<dbReference type="KEGG" id="mra:MRA_3878"/>
<dbReference type="eggNOG" id="COG0077">
    <property type="taxonomic scope" value="Bacteria"/>
</dbReference>
<dbReference type="HOGENOM" id="CLU_035008_0_0_11"/>
<dbReference type="UniPathway" id="UPA00121">
    <property type="reaction ID" value="UER00345"/>
</dbReference>
<dbReference type="Proteomes" id="UP000001988">
    <property type="component" value="Chromosome"/>
</dbReference>
<dbReference type="GO" id="GO:0005737">
    <property type="term" value="C:cytoplasm"/>
    <property type="evidence" value="ECO:0007669"/>
    <property type="project" value="TreeGrafter"/>
</dbReference>
<dbReference type="GO" id="GO:0004664">
    <property type="term" value="F:prephenate dehydratase activity"/>
    <property type="evidence" value="ECO:0007669"/>
    <property type="project" value="UniProtKB-EC"/>
</dbReference>
<dbReference type="GO" id="GO:0042803">
    <property type="term" value="F:protein homodimerization activity"/>
    <property type="evidence" value="ECO:0000250"/>
    <property type="project" value="UniProtKB"/>
</dbReference>
<dbReference type="GO" id="GO:0009094">
    <property type="term" value="P:L-phenylalanine biosynthetic process"/>
    <property type="evidence" value="ECO:0007669"/>
    <property type="project" value="UniProtKB-UniPathway"/>
</dbReference>
<dbReference type="CDD" id="cd04905">
    <property type="entry name" value="ACT_CM-PDT"/>
    <property type="match status" value="1"/>
</dbReference>
<dbReference type="CDD" id="cd13632">
    <property type="entry name" value="PBP2_Aa-PDT_like"/>
    <property type="match status" value="1"/>
</dbReference>
<dbReference type="FunFam" id="3.30.70.260:FF:000012">
    <property type="entry name" value="Prephenate dehydratase"/>
    <property type="match status" value="1"/>
</dbReference>
<dbReference type="FunFam" id="3.40.190.10:FF:000064">
    <property type="entry name" value="Prephenate dehydratase"/>
    <property type="match status" value="1"/>
</dbReference>
<dbReference type="FunFam" id="3.40.190.10:FF:000146">
    <property type="entry name" value="Prephenate dehydratase"/>
    <property type="match status" value="1"/>
</dbReference>
<dbReference type="Gene3D" id="3.30.70.260">
    <property type="match status" value="1"/>
</dbReference>
<dbReference type="Gene3D" id="3.40.190.10">
    <property type="entry name" value="Periplasmic binding protein-like II"/>
    <property type="match status" value="2"/>
</dbReference>
<dbReference type="InterPro" id="IPR045865">
    <property type="entry name" value="ACT-like_dom_sf"/>
</dbReference>
<dbReference type="InterPro" id="IPR002912">
    <property type="entry name" value="ACT_dom"/>
</dbReference>
<dbReference type="InterPro" id="IPR008242">
    <property type="entry name" value="Chor_mutase/pphenate_deHydtase"/>
</dbReference>
<dbReference type="InterPro" id="IPR001086">
    <property type="entry name" value="Preph_deHydtase"/>
</dbReference>
<dbReference type="InterPro" id="IPR018528">
    <property type="entry name" value="Preph_deHydtase_CS"/>
</dbReference>
<dbReference type="NCBIfam" id="NF008865">
    <property type="entry name" value="PRK11898.1"/>
    <property type="match status" value="1"/>
</dbReference>
<dbReference type="PANTHER" id="PTHR21022">
    <property type="entry name" value="PREPHENATE DEHYDRATASE P PROTEIN"/>
    <property type="match status" value="1"/>
</dbReference>
<dbReference type="PANTHER" id="PTHR21022:SF19">
    <property type="entry name" value="PREPHENATE DEHYDRATASE-RELATED"/>
    <property type="match status" value="1"/>
</dbReference>
<dbReference type="Pfam" id="PF01842">
    <property type="entry name" value="ACT"/>
    <property type="match status" value="1"/>
</dbReference>
<dbReference type="Pfam" id="PF00800">
    <property type="entry name" value="PDT"/>
    <property type="match status" value="1"/>
</dbReference>
<dbReference type="PIRSF" id="PIRSF001500">
    <property type="entry name" value="Chor_mut_pdt_Ppr"/>
    <property type="match status" value="1"/>
</dbReference>
<dbReference type="SUPFAM" id="SSF55021">
    <property type="entry name" value="ACT-like"/>
    <property type="match status" value="1"/>
</dbReference>
<dbReference type="SUPFAM" id="SSF53850">
    <property type="entry name" value="Periplasmic binding protein-like II"/>
    <property type="match status" value="1"/>
</dbReference>
<dbReference type="PROSITE" id="PS51671">
    <property type="entry name" value="ACT"/>
    <property type="match status" value="1"/>
</dbReference>
<dbReference type="PROSITE" id="PS00858">
    <property type="entry name" value="PREPHENATE_DEHYDR_2"/>
    <property type="match status" value="1"/>
</dbReference>
<dbReference type="PROSITE" id="PS51171">
    <property type="entry name" value="PREPHENATE_DEHYDR_3"/>
    <property type="match status" value="1"/>
</dbReference>
<reference key="1">
    <citation type="journal article" date="2008" name="PLoS ONE">
        <title>Genetic basis of virulence attenuation revealed by comparative genomic analysis of Mycobacterium tuberculosis strain H37Ra versus H37Rv.</title>
        <authorList>
            <person name="Zheng H."/>
            <person name="Lu L."/>
            <person name="Wang B."/>
            <person name="Pu S."/>
            <person name="Zhang X."/>
            <person name="Zhu G."/>
            <person name="Shi W."/>
            <person name="Zhang L."/>
            <person name="Wang H."/>
            <person name="Wang S."/>
            <person name="Zhao G."/>
            <person name="Zhang Y."/>
        </authorList>
    </citation>
    <scope>NUCLEOTIDE SEQUENCE [LARGE SCALE GENOMIC DNA]</scope>
    <source>
        <strain>ATCC 25177 / H37Ra</strain>
    </source>
</reference>
<proteinExistence type="inferred from homology"/>
<protein>
    <recommendedName>
        <fullName>Prephenate dehydratase</fullName>
        <shortName>PDT</shortName>
        <ecNumber>4.2.1.51</ecNumber>
    </recommendedName>
</protein>
<comment type="catalytic activity">
    <reaction>
        <text>prephenate + H(+) = 3-phenylpyruvate + CO2 + H2O</text>
        <dbReference type="Rhea" id="RHEA:21648"/>
        <dbReference type="ChEBI" id="CHEBI:15377"/>
        <dbReference type="ChEBI" id="CHEBI:15378"/>
        <dbReference type="ChEBI" id="CHEBI:16526"/>
        <dbReference type="ChEBI" id="CHEBI:18005"/>
        <dbReference type="ChEBI" id="CHEBI:29934"/>
        <dbReference type="EC" id="4.2.1.51"/>
    </reaction>
</comment>
<comment type="pathway">
    <text>Amino-acid biosynthesis; L-phenylalanine biosynthesis; phenylpyruvate from prephenate: step 1/1.</text>
</comment>
<comment type="subunit">
    <text evidence="1">Homodimer.</text>
</comment>
<sequence>MVRIAYLGPEGTFTEAALVRMVAAGLVPETGPDALQRMPVESAPAALAAVRDGGADYACVPIENSIDGSVLPTLDSLAIGVRLQVFAETTLDVTFSIVVKPGRNAADVRTLAAFPVAAAQVRQWLAAHLPAADLRPAYSNADAARQVADGLVDAAVTSPLAAARWGLAALADGVVDESNARTRFVLVGRPGPPPARTGADRTSAVLRIDNQPGALVAALAEFGIRGIDLTRIESRPTRTELGTYLFFVDCVGHIDDEAVAEALKAVHRRCADVRYLGSWPTGPAAGAQPPLVDEASRWLARLRAGKPEQTLVRPDDQGAQA</sequence>